<dbReference type="EC" id="3.1.-.-" evidence="1"/>
<dbReference type="EMBL" id="AP009178">
    <property type="protein sequence ID" value="BAF70163.1"/>
    <property type="molecule type" value="Genomic_DNA"/>
</dbReference>
<dbReference type="RefSeq" id="WP_012082426.1">
    <property type="nucleotide sequence ID" value="NC_009662.1"/>
</dbReference>
<dbReference type="SMR" id="A6Q3V4"/>
<dbReference type="STRING" id="387092.NIS_1053"/>
<dbReference type="KEGG" id="nis:NIS_1053"/>
<dbReference type="eggNOG" id="COG1418">
    <property type="taxonomic scope" value="Bacteria"/>
</dbReference>
<dbReference type="HOGENOM" id="CLU_028328_1_0_7"/>
<dbReference type="InParanoid" id="A6Q3V4"/>
<dbReference type="OrthoDB" id="9803205at2"/>
<dbReference type="Proteomes" id="UP000001118">
    <property type="component" value="Chromosome"/>
</dbReference>
<dbReference type="GO" id="GO:0005886">
    <property type="term" value="C:plasma membrane"/>
    <property type="evidence" value="ECO:0007669"/>
    <property type="project" value="UniProtKB-SubCell"/>
</dbReference>
<dbReference type="GO" id="GO:0003723">
    <property type="term" value="F:RNA binding"/>
    <property type="evidence" value="ECO:0007669"/>
    <property type="project" value="UniProtKB-UniRule"/>
</dbReference>
<dbReference type="GO" id="GO:0004521">
    <property type="term" value="F:RNA endonuclease activity"/>
    <property type="evidence" value="ECO:0007669"/>
    <property type="project" value="UniProtKB-UniRule"/>
</dbReference>
<dbReference type="GO" id="GO:0006402">
    <property type="term" value="P:mRNA catabolic process"/>
    <property type="evidence" value="ECO:0007669"/>
    <property type="project" value="UniProtKB-UniRule"/>
</dbReference>
<dbReference type="CDD" id="cd00077">
    <property type="entry name" value="HDc"/>
    <property type="match status" value="1"/>
</dbReference>
<dbReference type="CDD" id="cd22431">
    <property type="entry name" value="KH-I_RNaseY"/>
    <property type="match status" value="1"/>
</dbReference>
<dbReference type="Gene3D" id="1.10.3210.10">
    <property type="entry name" value="Hypothetical protein af1432"/>
    <property type="match status" value="1"/>
</dbReference>
<dbReference type="Gene3D" id="3.30.1370.10">
    <property type="entry name" value="K Homology domain, type 1"/>
    <property type="match status" value="1"/>
</dbReference>
<dbReference type="HAMAP" id="MF_00335">
    <property type="entry name" value="RNase_Y"/>
    <property type="match status" value="1"/>
</dbReference>
<dbReference type="InterPro" id="IPR003607">
    <property type="entry name" value="HD/PDEase_dom"/>
</dbReference>
<dbReference type="InterPro" id="IPR006674">
    <property type="entry name" value="HD_domain"/>
</dbReference>
<dbReference type="InterPro" id="IPR006675">
    <property type="entry name" value="HDIG_dom"/>
</dbReference>
<dbReference type="InterPro" id="IPR004087">
    <property type="entry name" value="KH_dom"/>
</dbReference>
<dbReference type="InterPro" id="IPR004088">
    <property type="entry name" value="KH_dom_type_1"/>
</dbReference>
<dbReference type="InterPro" id="IPR036612">
    <property type="entry name" value="KH_dom_type_1_sf"/>
</dbReference>
<dbReference type="InterPro" id="IPR017705">
    <property type="entry name" value="Ribonuclease_Y"/>
</dbReference>
<dbReference type="InterPro" id="IPR022711">
    <property type="entry name" value="RNase_Y_N"/>
</dbReference>
<dbReference type="NCBIfam" id="TIGR00277">
    <property type="entry name" value="HDIG"/>
    <property type="match status" value="1"/>
</dbReference>
<dbReference type="NCBIfam" id="TIGR03319">
    <property type="entry name" value="RNase_Y"/>
    <property type="match status" value="1"/>
</dbReference>
<dbReference type="PANTHER" id="PTHR12826">
    <property type="entry name" value="RIBONUCLEASE Y"/>
    <property type="match status" value="1"/>
</dbReference>
<dbReference type="PANTHER" id="PTHR12826:SF15">
    <property type="entry name" value="RIBONUCLEASE Y"/>
    <property type="match status" value="1"/>
</dbReference>
<dbReference type="Pfam" id="PF01966">
    <property type="entry name" value="HD"/>
    <property type="match status" value="1"/>
</dbReference>
<dbReference type="Pfam" id="PF00013">
    <property type="entry name" value="KH_1"/>
    <property type="match status" value="1"/>
</dbReference>
<dbReference type="Pfam" id="PF12072">
    <property type="entry name" value="RNase_Y_N"/>
    <property type="match status" value="1"/>
</dbReference>
<dbReference type="SMART" id="SM00471">
    <property type="entry name" value="HDc"/>
    <property type="match status" value="1"/>
</dbReference>
<dbReference type="SMART" id="SM00322">
    <property type="entry name" value="KH"/>
    <property type="match status" value="1"/>
</dbReference>
<dbReference type="SUPFAM" id="SSF54791">
    <property type="entry name" value="Eukaryotic type KH-domain (KH-domain type I)"/>
    <property type="match status" value="1"/>
</dbReference>
<dbReference type="SUPFAM" id="SSF109604">
    <property type="entry name" value="HD-domain/PDEase-like"/>
    <property type="match status" value="1"/>
</dbReference>
<dbReference type="PROSITE" id="PS51831">
    <property type="entry name" value="HD"/>
    <property type="match status" value="1"/>
</dbReference>
<feature type="chain" id="PRO_0000344912" description="Ribonuclease Y">
    <location>
        <begin position="1"/>
        <end position="522"/>
    </location>
</feature>
<feature type="transmembrane region" description="Helical" evidence="1">
    <location>
        <begin position="2"/>
        <end position="22"/>
    </location>
</feature>
<feature type="domain" description="KH" evidence="1">
    <location>
        <begin position="212"/>
        <end position="278"/>
    </location>
</feature>
<feature type="domain" description="HD" evidence="2">
    <location>
        <begin position="338"/>
        <end position="431"/>
    </location>
</feature>
<sequence length="522" mass="59107">MWVEILVGSSAAIISGAAGYLLSKKIEKDKLKIYEEQARAKAKAIEHEAEKILQNAQVQVKEAELELKRDFEKKLEELKRDYEERFNELMEKEMSLKQMFKDELKHITLEKQEIKAEREEINRLKNEYEELKKRYQEKYQEVLEALQQQAGLTLEEAKNLILQKAEEESRLEIANIVRKYEEEAKREAKRRANYIIAQATTRFAGEFAAERLINTVSIPSEDIKGRIIGKEGRNIKTLEMLLGVDIIIDDTPNAIILSSFNLYRRAIATKVIELLVEDGRIQPSRIEEIYEKVKEEFDQQLLEEGENIVIDLGIGLIHPEIVKLIGRLKFRASYGQNALGHSLEVAHLAGIMAAEMGGDEVMAKRAGLLHDIGKALTHEYSGSHVDLGAEICKRYKEPDVVINAIYAHHGHEEPRSIEAAAVCAADTLSAARPGARREVLEAFLKRVQAIEEIALSKPGVKKAYAINAGREVRVIVNADLVNDNEAVLLAKEIAKDIETGVQYPGEIKVNVIRENRAIEYAR</sequence>
<evidence type="ECO:0000255" key="1">
    <source>
        <dbReference type="HAMAP-Rule" id="MF_00335"/>
    </source>
</evidence>
<evidence type="ECO:0000255" key="2">
    <source>
        <dbReference type="PROSITE-ProRule" id="PRU01175"/>
    </source>
</evidence>
<proteinExistence type="inferred from homology"/>
<reference key="1">
    <citation type="journal article" date="2007" name="Proc. Natl. Acad. Sci. U.S.A.">
        <title>Deep-sea vent epsilon-proteobacterial genomes provide insights into emergence of pathogens.</title>
        <authorList>
            <person name="Nakagawa S."/>
            <person name="Takaki Y."/>
            <person name="Shimamura S."/>
            <person name="Reysenbach A.-L."/>
            <person name="Takai K."/>
            <person name="Horikoshi K."/>
        </authorList>
    </citation>
    <scope>NUCLEOTIDE SEQUENCE [LARGE SCALE GENOMIC DNA]</scope>
    <source>
        <strain>SB155-2</strain>
    </source>
</reference>
<accession>A6Q3V4</accession>
<comment type="function">
    <text evidence="1">Endoribonuclease that initiates mRNA decay.</text>
</comment>
<comment type="subcellular location">
    <subcellularLocation>
        <location evidence="1">Cell membrane</location>
        <topology evidence="1">Single-pass membrane protein</topology>
    </subcellularLocation>
</comment>
<comment type="similarity">
    <text evidence="1">Belongs to the RNase Y family.</text>
</comment>
<organism>
    <name type="scientific">Nitratiruptor sp. (strain SB155-2)</name>
    <dbReference type="NCBI Taxonomy" id="387092"/>
    <lineage>
        <taxon>Bacteria</taxon>
        <taxon>Pseudomonadati</taxon>
        <taxon>Campylobacterota</taxon>
        <taxon>Epsilonproteobacteria</taxon>
        <taxon>Nautiliales</taxon>
        <taxon>Nitratiruptoraceae</taxon>
        <taxon>Nitratiruptor</taxon>
    </lineage>
</organism>
<keyword id="KW-1003">Cell membrane</keyword>
<keyword id="KW-0255">Endonuclease</keyword>
<keyword id="KW-0378">Hydrolase</keyword>
<keyword id="KW-0472">Membrane</keyword>
<keyword id="KW-0540">Nuclease</keyword>
<keyword id="KW-1185">Reference proteome</keyword>
<keyword id="KW-0694">RNA-binding</keyword>
<keyword id="KW-0812">Transmembrane</keyword>
<keyword id="KW-1133">Transmembrane helix</keyword>
<gene>
    <name evidence="1" type="primary">rny</name>
    <name type="ordered locus">NIS_1053</name>
</gene>
<name>RNY_NITSB</name>
<protein>
    <recommendedName>
        <fullName evidence="1">Ribonuclease Y</fullName>
        <shortName evidence="1">RNase Y</shortName>
        <ecNumber evidence="1">3.1.-.-</ecNumber>
    </recommendedName>
</protein>